<accession>O90299</accession>
<accession>Q68984</accession>
<sequence length="114" mass="11806">MGSRPWALGLFCCCSSCFCLCCSRHRPVSRLAAVVGGAAAVPAVVSGVTGLILSPSQSPIFIQPTPSPRMSPLRPGLDLVFANPSDHSAPLGATRPSAPPLPHVVDLPQLGPRR</sequence>
<organism>
    <name type="scientific">Hepatitis E virus genotype 1 (isolate Human/India/Hyderabad)</name>
    <name type="common">HEV-1</name>
    <dbReference type="NCBI Taxonomy" id="512346"/>
    <lineage>
        <taxon>Viruses</taxon>
        <taxon>Riboviria</taxon>
        <taxon>Orthornavirae</taxon>
        <taxon>Kitrinoviricota</taxon>
        <taxon>Alsuviricetes</taxon>
        <taxon>Hepelivirales</taxon>
        <taxon>Hepeviridae</taxon>
        <taxon>Orthohepevirinae</taxon>
        <taxon>Paslahepevirus</taxon>
        <taxon>Hepatitis E virus</taxon>
    </lineage>
</organism>
<reference key="1">
    <citation type="journal article" date="1995" name="J. Clin. Microbiol.">
        <title>An Indian strain of hepatitis E virus (HEV): cloning, sequence, and expression of structural region and antibody responses in sera from individuals from an area of high-level HEV endemicity.</title>
        <authorList>
            <person name="Panda S.K."/>
            <person name="Nanda S.K."/>
            <person name="Zafrullah M."/>
            <person name="Ansari I.H."/>
            <person name="Ozdener M.H."/>
            <person name="Jameel S."/>
        </authorList>
    </citation>
    <scope>NUCLEOTIDE SEQUENCE [GENOMIC RNA]</scope>
</reference>
<reference key="2">
    <citation type="journal article" date="2000" name="J. Virol.">
        <title>The in vitro-synthesized RNA from a cDNA clone of hepatitis E virus is infectious.</title>
        <authorList>
            <person name="Panda S.K."/>
            <person name="Ansari I.H."/>
            <person name="Durgapal H."/>
            <person name="Agrawal S."/>
            <person name="Jameel S."/>
        </authorList>
    </citation>
    <scope>NUCLEOTIDE SEQUENCE [GENOMIC RNA]</scope>
    <source>
        <strain>Infectious clone pSGI-HEV</strain>
    </source>
</reference>
<reference key="3">
    <citation type="journal article" date="1997" name="J. Virol.">
        <title>The ORF3 protein of hepatitis E virus is a phosphoprotein that associates with the cytoskeleton.</title>
        <authorList>
            <person name="Zafrullah M."/>
            <person name="Ozdener M.H."/>
            <person name="Panda S.K."/>
            <person name="Jameel S."/>
        </authorList>
    </citation>
    <scope>PHOSPHORYLATION AT SER-71</scope>
    <scope>MUTAGENESIS OF SER-71</scope>
    <scope>SUBCELLULAR LOCATION</scope>
</reference>
<reference key="4">
    <citation type="journal article" date="2001" name="J. Biol. Chem.">
        <title>The ORF3 protein of hepatitis E virus binds to Src homology 3 domains and activates MAPK.</title>
        <authorList>
            <person name="Korkaya H."/>
            <person name="Jameel S."/>
            <person name="Gupta D."/>
            <person name="Tyagi S."/>
            <person name="Kumar R."/>
            <person name="Zafrullah M."/>
            <person name="Mazumdar M."/>
            <person name="Lal S.K."/>
            <person name="Xiaofang L."/>
            <person name="Sehgal D."/>
            <person name="Das S.R."/>
            <person name="Sahal D."/>
        </authorList>
    </citation>
    <scope>INTERACTION WITH HUMAN SRC; HCK; FYN; PIK3R3 AND GRB2</scope>
</reference>
<reference key="5">
    <citation type="journal article" date="2001" name="J. Virol.">
        <title>Self-association and mapping of the interaction domain of hepatitis E virus ORF3 protein.</title>
        <authorList>
            <person name="Tyagi S."/>
            <person name="Jameel S."/>
            <person name="Lal S.K."/>
        </authorList>
    </citation>
    <scope>SUBUNIT</scope>
    <scope>REGION OF HOMODIMERIZATION</scope>
</reference>
<reference key="6">
    <citation type="journal article" date="2002" name="J. Biol. Chem.">
        <title>The phosphorylated form of the ORF3 protein of hepatitis E virus interacts with its non-glycosylated form of the major capsid protein, ORF2.</title>
        <authorList>
            <person name="Tyagi S."/>
            <person name="Korkaya H."/>
            <person name="Zafrullah M."/>
            <person name="Jameel S."/>
            <person name="Lal S.K."/>
        </authorList>
    </citation>
    <scope>INTERACTION WITH THE ISOFORM CAPSID PROTEIN</scope>
</reference>
<reference key="7">
    <citation type="journal article" date="2004" name="J. Biol. Chem.">
        <title>The ORF3 protein of hepatitis E virus interacts with liver-specific alpha1-microglobulin and its precursor alpha1-microglobulin/bikunin precursor (AMBP) and expedites their export from the hepatocyte.</title>
        <authorList>
            <person name="Tyagi S."/>
            <person name="Surjit M."/>
            <person name="Roy A.K."/>
            <person name="Jameel S."/>
            <person name="Lal S.K."/>
        </authorList>
    </citation>
    <scope>INTERACTION WITH HUMAN AMBP/ALPHA-1-MICROGLOBULIN</scope>
</reference>
<reference key="8">
    <citation type="journal article" date="2005" name="J. Virol.">
        <title>The 41-amino-acid C-terminal region of the hepatitis E virus ORF3 protein interacts with bikunin, a Kunitz-type serine protease inhibitor.</title>
        <authorList>
            <person name="Tyagi S."/>
            <person name="Surjit M."/>
            <person name="Lal S.K."/>
        </authorList>
    </citation>
    <scope>INTERACTION WITH HUMAN AMBP/BIKUNIN</scope>
</reference>
<reference key="9">
    <citation type="journal article" date="2008" name="Biochemistry">
        <title>The ORF3 protein of hepatitis E virus interacts with hemopexin by means of its 26 amino acid N-terminal hydrophobic domain II.</title>
        <authorList>
            <person name="Ratra R."/>
            <person name="Kar-Roy A."/>
            <person name="Lal S.K."/>
        </authorList>
    </citation>
    <scope>INTERACTION WITH HUMAN HPX</scope>
</reference>
<comment type="function">
    <text evidence="1">Small multifunctional phosphoprotein involved in virion morphogenesis, egress and counteracting host innate immunity. Plays critical roles in the final steps of viral release by interacting with host TSG101, a member of the vacuolar protein-sorting pathway and using other cellular host proteins involved in vesicle formation pathway. Also acts as a viroporin and forms ion conductive pores allowing viral particle release. Impairs the generation of type I interferon by down-regulating host TLR3 and TLR7 as well as their downstream signaling pathways. Down-regulates the phosphorylation of host IRF3 via the interaction with host SIRP-alpha, thereby inhibiting IFN-I expression. Interacts with host microtubules.</text>
</comment>
<comment type="subunit">
    <text evidence="1 3 4 5 6 7 8">Forms homooligomers (By similarity). Interacts with host SRC, HCK, FYN, PIK3R3 and GRB2 (via SH3 domain); binding does not activate the kinases. Interacts with host AMBP/bikunin and AMBP/alpha-1-microglobulin peptides. Interacts with host HPX/hemopexin. Interacts (when phosphorylated) with capsid protein ORF2 (PubMed:11160756, PubMed:11518702, PubMed:11934888, PubMed:15037615, PubMed:16140784, PubMed:18211098). Interacts with host TSG101; this interaction plays a role in viral release from the host cell (By similarity). Interacts with host SIRPA; this interaction down-regulates the phosphorylation of host IRF3 (By similarity).</text>
</comment>
<comment type="interaction">
    <interactant intactId="EBI-11179411">
        <id>O90299</id>
    </interactant>
    <interactant intactId="EBI-11179420">
        <id>Q9WC28</id>
        <label>ORF1</label>
    </interactant>
    <organismsDiffer>false</organismsDiffer>
    <experiments>41</experiments>
</comment>
<comment type="interaction">
    <interactant intactId="EBI-11179411">
        <id>O90299</id>
    </interactant>
    <interactant intactId="EBI-11179411">
        <id>O90299</id>
        <label>ORF3</label>
    </interactant>
    <organismsDiffer>false</organismsDiffer>
    <experiments>6</experiments>
</comment>
<comment type="subcellular location">
    <subcellularLocation>
        <location evidence="1">Host endoplasmic reticulum membrane</location>
        <topology evidence="1">Lipid-anchor</topology>
    </subcellularLocation>
    <subcellularLocation>
        <location evidence="9">Host cytoplasm</location>
        <location evidence="9">Host cytoskeleton</location>
    </subcellularLocation>
    <subcellularLocation>
        <location evidence="1">Virion</location>
    </subcellularLocation>
    <subcellularLocation>
        <location evidence="1">Host cell membrane</location>
        <topology evidence="1">Lipid-anchor</topology>
    </subcellularLocation>
    <text evidence="1 9">The N-terminal region seems to associate with the cytoskeleton probably via one of its hydrophobic regions (By similarity) (PubMed:9371561). Present on the surface of the membrane-wrapped virions (By similarity).</text>
</comment>
<comment type="domain">
    <text evidence="1">The PSAP motif is necessary for the release of membrane-wrapped virions from infected cells.</text>
</comment>
<comment type="PTM">
    <text evidence="1">Palmitoylated in the N-terminus.</text>
</comment>
<comment type="miscellaneous">
    <text evidence="1">The viral particles present in feces and bile are non-enveloped, while those in circulating blood and culture supernatants are covered with a cellular membrane (quasi-enveloped).</text>
</comment>
<comment type="similarity">
    <text evidence="10">Belongs to the hepevirus ORF3 protein family.</text>
</comment>
<comment type="sequence caution" evidence="10">
    <conflict type="erroneous initiation">
        <sequence resource="EMBL-CDS" id="AAA97365"/>
    </conflict>
</comment>
<comment type="sequence caution" evidence="10">
    <conflict type="erroneous initiation">
        <sequence resource="EMBL-CDS" id="AAC27935"/>
    </conflict>
</comment>
<feature type="chain" id="PRO_0000334539" description="Protein ORF3">
    <location>
        <begin position="1"/>
        <end position="114"/>
    </location>
</feature>
<feature type="region of interest" description="Hydrophobic">
    <location>
        <begin position="6"/>
        <end position="24"/>
    </location>
</feature>
<feature type="region of interest" description="Interaction with host HPX">
    <location>
        <begin position="28"/>
        <end position="68"/>
    </location>
</feature>
<feature type="region of interest" description="Hydrophobic">
    <location>
        <begin position="33"/>
        <end position="53"/>
    </location>
</feature>
<feature type="region of interest" description="Interaction with the capsid protein">
    <location>
        <begin position="48"/>
        <end position="72"/>
    </location>
</feature>
<feature type="region of interest" description="Homodimerization, and interaction with host AMBP/bikunin">
    <location>
        <begin position="72"/>
        <end position="114"/>
    </location>
</feature>
<feature type="region of interest" description="Disordered" evidence="2">
    <location>
        <begin position="85"/>
        <end position="114"/>
    </location>
</feature>
<feature type="region of interest" description="Interaction with host SRC, HCK, FYN, PIK3R3 and GRB2" evidence="10">
    <location>
        <begin position="95"/>
        <end position="104"/>
    </location>
</feature>
<feature type="short sequence motif" description="PTAP/PSAP motif" evidence="1">
    <location>
        <begin position="96"/>
        <end position="99"/>
    </location>
</feature>
<feature type="modified residue" description="Phosphoserine; by host" evidence="9">
    <location>
        <position position="71"/>
    </location>
</feature>
<feature type="mutagenesis site" description="Complete loss of phosphorylation." evidence="9">
    <original>S</original>
    <variation>A</variation>
    <location>
        <position position="71"/>
    </location>
</feature>
<keyword id="KW-1032">Host cell membrane</keyword>
<keyword id="KW-1035">Host cytoplasm</keyword>
<keyword id="KW-1037">Host cytoskeleton</keyword>
<keyword id="KW-1038">Host endoplasmic reticulum</keyword>
<keyword id="KW-1043">Host membrane</keyword>
<keyword id="KW-0945">Host-virus interaction</keyword>
<keyword id="KW-1090">Inhibition of host innate immune response by virus</keyword>
<keyword id="KW-0449">Lipoprotein</keyword>
<keyword id="KW-0472">Membrane</keyword>
<keyword id="KW-0597">Phosphoprotein</keyword>
<keyword id="KW-0899">Viral immunoevasion</keyword>
<keyword id="KW-0946">Virion</keyword>
<dbReference type="EMBL" id="U22532">
    <property type="protein sequence ID" value="AAA97365.1"/>
    <property type="status" value="ALT_INIT"/>
    <property type="molecule type" value="Genomic_RNA"/>
</dbReference>
<dbReference type="EMBL" id="AF076239">
    <property type="protein sequence ID" value="AAC27935.1"/>
    <property type="status" value="ALT_INIT"/>
    <property type="molecule type" value="Genomic_RNA"/>
</dbReference>
<dbReference type="IntAct" id="O90299">
    <property type="interactions" value="2"/>
</dbReference>
<dbReference type="iPTMnet" id="O90299"/>
<dbReference type="Proteomes" id="UP000007244">
    <property type="component" value="Genome"/>
</dbReference>
<dbReference type="GO" id="GO:0044167">
    <property type="term" value="C:host cell endoplasmic reticulum membrane"/>
    <property type="evidence" value="ECO:0007669"/>
    <property type="project" value="UniProtKB-SubCell"/>
</dbReference>
<dbReference type="GO" id="GO:0020002">
    <property type="term" value="C:host cell plasma membrane"/>
    <property type="evidence" value="ECO:0007669"/>
    <property type="project" value="UniProtKB-SubCell"/>
</dbReference>
<dbReference type="GO" id="GO:0044163">
    <property type="term" value="C:host cytoskeleton"/>
    <property type="evidence" value="ECO:0007669"/>
    <property type="project" value="UniProtKB-SubCell"/>
</dbReference>
<dbReference type="GO" id="GO:0016020">
    <property type="term" value="C:membrane"/>
    <property type="evidence" value="ECO:0007669"/>
    <property type="project" value="UniProtKB-KW"/>
</dbReference>
<dbReference type="GO" id="GO:0044423">
    <property type="term" value="C:virion component"/>
    <property type="evidence" value="ECO:0007669"/>
    <property type="project" value="UniProtKB-KW"/>
</dbReference>
<dbReference type="GO" id="GO:0042802">
    <property type="term" value="F:identical protein binding"/>
    <property type="evidence" value="ECO:0000353"/>
    <property type="project" value="IntAct"/>
</dbReference>
<dbReference type="GO" id="GO:0052170">
    <property type="term" value="P:symbiont-mediated suppression of host innate immune response"/>
    <property type="evidence" value="ECO:0007669"/>
    <property type="project" value="UniProtKB-KW"/>
</dbReference>
<dbReference type="InterPro" id="IPR003384">
    <property type="entry name" value="HEV_Orf2"/>
</dbReference>
<dbReference type="Pfam" id="PF02444">
    <property type="entry name" value="HEV_ORF1"/>
    <property type="match status" value="1"/>
</dbReference>
<protein>
    <recommendedName>
        <fullName>Protein ORF3</fullName>
        <shortName>pORF3</shortName>
    </recommendedName>
</protein>
<proteinExistence type="evidence at protein level"/>
<organismHost>
    <name type="scientific">Bandicota bengalensis</name>
    <name type="common">lesser bandicoot rat</name>
    <dbReference type="NCBI Taxonomy" id="69079"/>
</organismHost>
<organismHost>
    <name type="scientific">Callithrix</name>
    <dbReference type="NCBI Taxonomy" id="9481"/>
</organismHost>
<organismHost>
    <name type="scientific">Cercopithecus hamlyni</name>
    <name type="common">Owl-faced monkey</name>
    <name type="synonym">Hamlyn's monkey</name>
    <dbReference type="NCBI Taxonomy" id="9536"/>
</organismHost>
<organismHost>
    <name type="scientific">Chlorocebus aethiops</name>
    <name type="common">Green monkey</name>
    <name type="synonym">Cercopithecus aethiops</name>
    <dbReference type="NCBI Taxonomy" id="9534"/>
</organismHost>
<organismHost>
    <name type="scientific">Homo sapiens</name>
    <name type="common">Human</name>
    <dbReference type="NCBI Taxonomy" id="9606"/>
</organismHost>
<organismHost>
    <name type="scientific">Macaca</name>
    <name type="common">macaques</name>
    <dbReference type="NCBI Taxonomy" id="9539"/>
</organismHost>
<organismHost>
    <name type="scientific">Mus musculus</name>
    <name type="common">Mouse</name>
    <dbReference type="NCBI Taxonomy" id="10090"/>
</organismHost>
<organismHost>
    <name type="scientific">Pan troglodytes</name>
    <name type="common">Chimpanzee</name>
    <dbReference type="NCBI Taxonomy" id="9598"/>
</organismHost>
<organismHost>
    <name type="scientific">Saimiri</name>
    <name type="common">squirrel monkeys</name>
    <dbReference type="NCBI Taxonomy" id="9520"/>
</organismHost>
<organismHost>
    <name type="scientific">Sus scrofa</name>
    <name type="common">Pig</name>
    <dbReference type="NCBI Taxonomy" id="9823"/>
</organismHost>
<name>ORF3_HEVHY</name>
<evidence type="ECO:0000250" key="1">
    <source>
        <dbReference type="UniProtKB" id="Q81870"/>
    </source>
</evidence>
<evidence type="ECO:0000256" key="2">
    <source>
        <dbReference type="SAM" id="MobiDB-lite"/>
    </source>
</evidence>
<evidence type="ECO:0000269" key="3">
    <source>
    </source>
</evidence>
<evidence type="ECO:0000269" key="4">
    <source>
    </source>
</evidence>
<evidence type="ECO:0000269" key="5">
    <source>
    </source>
</evidence>
<evidence type="ECO:0000269" key="6">
    <source>
    </source>
</evidence>
<evidence type="ECO:0000269" key="7">
    <source>
    </source>
</evidence>
<evidence type="ECO:0000269" key="8">
    <source>
    </source>
</evidence>
<evidence type="ECO:0000269" key="9">
    <source>
    </source>
</evidence>
<evidence type="ECO:0000305" key="10"/>
<gene>
    <name type="ORF">ORF3</name>
</gene>